<accession>Q66635</accession>
<comment type="function">
    <text evidence="1">Capsid vertex-specific component that plays a role during viral DNA encapsidation, assuring correct genome cleavage and presumably stabilizing capsids that contain full-length viral genomes.</text>
</comment>
<comment type="subunit">
    <text evidence="1">Interacts (via C-terminus) with capsid vertex component 2/CVC2.</text>
</comment>
<comment type="subcellular location">
    <subcellularLocation>
        <location evidence="1">Virion</location>
    </subcellularLocation>
    <subcellularLocation>
        <location evidence="1">Host nucleus</location>
    </subcellularLocation>
</comment>
<comment type="similarity">
    <text evidence="1">Belongs to the herpesviridae CVC1 protein family.</text>
</comment>
<sequence length="478" mass="51568">MDVHLGNWRLCGRRCGRLAHVVLPEAFLDRHGLAEDAGAEFFVQTRFTGSLRPSSYVRVIGAFFGGGSGDEIARRDRRSALNLVLSLPLLADGDGRYDPHNIATLKVRSGDGRRLVFVDFFYLSLLGAQMPRGPESEGEGGKDGGAGRGDGEASRESPLERIAAEASGPGPGSGRGRSAGGRRASPLSVLSGLLDNKYTQIAKHHRALEDPGAVRGVNIEPDRRDHGNLAGVGKRKVRCALNLIDLKRDDITFTSSTHLLSGTRFTLCHYPRPVAPPGGAPWESTLDGLSERQLRGVDPLAALILGFDFLERAQTGLVNSLARECENGGLKIFQRLPVCVEKKHDIRGVLGDHFTEACHVLARQVGESCAWVRACVSGERGHVGLWADFLNLWEAGPSTLGVDLSYLFSPGPPDDESAFWARLLGSDRLLDAIKTGARAVLVVDSQLAAWLLLPGGFAIKGRYSLSREDIQITVGRYG</sequence>
<organismHost>
    <name type="scientific">Equus caballus</name>
    <name type="common">Horse</name>
    <dbReference type="NCBI Taxonomy" id="9796"/>
</organismHost>
<feature type="chain" id="PRO_0000406063" description="Capsid vertex component 1">
    <location>
        <begin position="1"/>
        <end position="478"/>
    </location>
</feature>
<feature type="region of interest" description="Disordered" evidence="2">
    <location>
        <begin position="131"/>
        <end position="184"/>
    </location>
</feature>
<feature type="compositionally biased region" description="Basic and acidic residues" evidence="2">
    <location>
        <begin position="149"/>
        <end position="163"/>
    </location>
</feature>
<feature type="compositionally biased region" description="Gly residues" evidence="2">
    <location>
        <begin position="169"/>
        <end position="179"/>
    </location>
</feature>
<reference key="1">
    <citation type="journal article" date="1995" name="J. Mol. Biol.">
        <title>The DNA sequence of equine herpesvirus 2.</title>
        <authorList>
            <person name="Telford E.A.R."/>
            <person name="Watson M.S."/>
            <person name="Aird H.C."/>
            <person name="Perry J."/>
            <person name="Davison A.J."/>
        </authorList>
    </citation>
    <scope>NUCLEOTIDE SEQUENCE [LARGE SCALE GENOMIC DNA]</scope>
</reference>
<reference key="2">
    <citation type="submission" date="2015-01" db="EMBL/GenBank/DDBJ databases">
        <authorList>
            <person name="Davison A.J."/>
        </authorList>
    </citation>
    <scope>SEQUENCE REVISION</scope>
</reference>
<gene>
    <name evidence="1" type="primary">CVC1</name>
    <name type="ordered locus">32</name>
</gene>
<keyword id="KW-0167">Capsid protein</keyword>
<keyword id="KW-1048">Host nucleus</keyword>
<keyword id="KW-0426">Late protein</keyword>
<keyword id="KW-1185">Reference proteome</keyword>
<keyword id="KW-0231">Viral genome packaging</keyword>
<keyword id="KW-1188">Viral release from host cell</keyword>
<keyword id="KW-0946">Virion</keyword>
<name>CVC1_EHV2</name>
<proteinExistence type="inferred from homology"/>
<evidence type="ECO:0000255" key="1">
    <source>
        <dbReference type="HAMAP-Rule" id="MF_04017"/>
    </source>
</evidence>
<evidence type="ECO:0000256" key="2">
    <source>
        <dbReference type="SAM" id="MobiDB-lite"/>
    </source>
</evidence>
<organism>
    <name type="scientific">Equine herpesvirus 2 (strain 86/87)</name>
    <name type="common">EHV-2</name>
    <dbReference type="NCBI Taxonomy" id="82831"/>
    <lineage>
        <taxon>Viruses</taxon>
        <taxon>Duplodnaviria</taxon>
        <taxon>Heunggongvirae</taxon>
        <taxon>Peploviricota</taxon>
        <taxon>Herviviricetes</taxon>
        <taxon>Herpesvirales</taxon>
        <taxon>Orthoherpesviridae</taxon>
        <taxon>Gammaherpesvirinae</taxon>
        <taxon>Percavirus</taxon>
        <taxon>Percavirus equidgamma2</taxon>
        <taxon>Equid gammaherpesvirus 2</taxon>
    </lineage>
</organism>
<dbReference type="EMBL" id="U20824">
    <property type="protein sequence ID" value="AAC13819.2"/>
    <property type="molecule type" value="Genomic_DNA"/>
</dbReference>
<dbReference type="PIR" id="S55626">
    <property type="entry name" value="S55626"/>
</dbReference>
<dbReference type="SMR" id="Q66635"/>
<dbReference type="KEGG" id="vg:1461066"/>
<dbReference type="Proteomes" id="UP000007083">
    <property type="component" value="Segment"/>
</dbReference>
<dbReference type="GO" id="GO:0042025">
    <property type="term" value="C:host cell nucleus"/>
    <property type="evidence" value="ECO:0007669"/>
    <property type="project" value="UniProtKB-SubCell"/>
</dbReference>
<dbReference type="GO" id="GO:0019028">
    <property type="term" value="C:viral capsid"/>
    <property type="evidence" value="ECO:0007669"/>
    <property type="project" value="UniProtKB-KW"/>
</dbReference>
<dbReference type="GO" id="GO:0051276">
    <property type="term" value="P:chromosome organization"/>
    <property type="evidence" value="ECO:0007669"/>
    <property type="project" value="InterPro"/>
</dbReference>
<dbReference type="HAMAP" id="MF_04017">
    <property type="entry name" value="HSV_CVC1"/>
    <property type="match status" value="1"/>
</dbReference>
<dbReference type="InterPro" id="IPR007640">
    <property type="entry name" value="UL17-like"/>
</dbReference>
<dbReference type="Pfam" id="PF04559">
    <property type="entry name" value="Herpes_UL17"/>
    <property type="match status" value="1"/>
</dbReference>
<protein>
    <recommendedName>
        <fullName evidence="1">Capsid vertex component 1</fullName>
    </recommendedName>
</protein>